<accession>P16824</accession>
<accession>Q7M6M0</accession>
<proteinExistence type="inferred from homology"/>
<feature type="chain" id="PRO_0000182965" description="Deoxyuridine 5'-triphosphate nucleotidohydrolase">
    <location>
        <begin position="1"/>
        <end position="388"/>
    </location>
</feature>
<feature type="region of interest" description="Disordered" evidence="2">
    <location>
        <begin position="77"/>
        <end position="96"/>
    </location>
</feature>
<feature type="region of interest" description="Disordered" evidence="2">
    <location>
        <begin position="336"/>
        <end position="388"/>
    </location>
</feature>
<feature type="compositionally biased region" description="Basic and acidic residues" evidence="2">
    <location>
        <begin position="77"/>
        <end position="88"/>
    </location>
</feature>
<feature type="compositionally biased region" description="Acidic residues" evidence="2">
    <location>
        <begin position="351"/>
        <end position="363"/>
    </location>
</feature>
<keyword id="KW-0378">Hydrolase</keyword>
<keyword id="KW-0460">Magnesium</keyword>
<keyword id="KW-0479">Metal-binding</keyword>
<keyword id="KW-0546">Nucleotide metabolism</keyword>
<keyword id="KW-1185">Reference proteome</keyword>
<keyword id="KW-0946">Virion</keyword>
<name>DUT_HCMVA</name>
<organism>
    <name type="scientific">Human cytomegalovirus (strain AD169)</name>
    <name type="common">HHV-5</name>
    <name type="synonym">Human herpesvirus 5</name>
    <dbReference type="NCBI Taxonomy" id="10360"/>
    <lineage>
        <taxon>Viruses</taxon>
        <taxon>Duplodnaviria</taxon>
        <taxon>Heunggongvirae</taxon>
        <taxon>Peploviricota</taxon>
        <taxon>Herviviricetes</taxon>
        <taxon>Herpesvirales</taxon>
        <taxon>Orthoherpesviridae</taxon>
        <taxon>Betaherpesvirinae</taxon>
        <taxon>Cytomegalovirus</taxon>
        <taxon>Cytomegalovirus humanbeta5</taxon>
        <taxon>Human cytomegalovirus</taxon>
    </lineage>
</organism>
<protein>
    <recommendedName>
        <fullName evidence="1">Deoxyuridine 5'-triphosphate nucleotidohydrolase</fullName>
        <shortName evidence="1">dUTPase</shortName>
        <ecNumber evidence="1">3.6.1.23</ecNumber>
    </recommendedName>
    <alternativeName>
        <fullName evidence="1">dUTP pyrophosphatase</fullName>
    </alternativeName>
</protein>
<organismHost>
    <name type="scientific">Homo sapiens</name>
    <name type="common">Human</name>
    <dbReference type="NCBI Taxonomy" id="9606"/>
</organismHost>
<dbReference type="EC" id="3.6.1.23" evidence="1"/>
<dbReference type="EMBL" id="X17403">
    <property type="protein sequence ID" value="CAA35387.1"/>
    <property type="molecule type" value="Genomic_DNA"/>
</dbReference>
<dbReference type="EMBL" id="BK000394">
    <property type="protein sequence ID" value="DAA00168.1"/>
    <property type="molecule type" value="Genomic_DNA"/>
</dbReference>
<dbReference type="PIR" id="S09835">
    <property type="entry name" value="S09835"/>
</dbReference>
<dbReference type="SMR" id="P16824"/>
<dbReference type="UniPathway" id="UPA00610">
    <property type="reaction ID" value="UER00666"/>
</dbReference>
<dbReference type="Proteomes" id="UP000008991">
    <property type="component" value="Segment"/>
</dbReference>
<dbReference type="Proteomes" id="UP000008992">
    <property type="component" value="Segment"/>
</dbReference>
<dbReference type="GO" id="GO:0044423">
    <property type="term" value="C:virion component"/>
    <property type="evidence" value="ECO:0007669"/>
    <property type="project" value="UniProtKB-KW"/>
</dbReference>
<dbReference type="GO" id="GO:0004170">
    <property type="term" value="F:dUTP diphosphatase activity"/>
    <property type="evidence" value="ECO:0007669"/>
    <property type="project" value="UniProtKB-EC"/>
</dbReference>
<dbReference type="GO" id="GO:0046872">
    <property type="term" value="F:metal ion binding"/>
    <property type="evidence" value="ECO:0007669"/>
    <property type="project" value="UniProtKB-KW"/>
</dbReference>
<dbReference type="GO" id="GO:0006226">
    <property type="term" value="P:dUMP biosynthetic process"/>
    <property type="evidence" value="ECO:0007669"/>
    <property type="project" value="UniProtKB-UniPathway"/>
</dbReference>
<dbReference type="GO" id="GO:0046080">
    <property type="term" value="P:dUTP metabolic process"/>
    <property type="evidence" value="ECO:0007669"/>
    <property type="project" value="InterPro"/>
</dbReference>
<dbReference type="HAMAP" id="MF_04031">
    <property type="entry name" value="HSV_DUT"/>
    <property type="match status" value="1"/>
</dbReference>
<dbReference type="InterPro" id="IPR036157">
    <property type="entry name" value="dUTPase-like_sf"/>
</dbReference>
<dbReference type="InterPro" id="IPR006882">
    <property type="entry name" value="Herpes_Orf11"/>
</dbReference>
<dbReference type="InterPro" id="IPR034745">
    <property type="entry name" value="HSV_DUT"/>
</dbReference>
<dbReference type="Pfam" id="PF04797">
    <property type="entry name" value="Herpes_ORF11"/>
    <property type="match status" value="1"/>
</dbReference>
<dbReference type="SUPFAM" id="SSF51283">
    <property type="entry name" value="dUTPase-like"/>
    <property type="match status" value="1"/>
</dbReference>
<gene>
    <name evidence="1" type="primary">DUT</name>
    <name type="ordered locus">UL72</name>
</gene>
<sequence>MLTMLTDRIDSQLVLSRLPRSRFQRFWETPTLIMKEESASSSGSIILAEKSVNMRYCVRFASDSDFQTTFTLPQSTEEKYDKEQHPGEDEASSPLPSPLKVPYKWMPSSFIVKQCHTQLAFYNKHIIWLSRERKVPTSLGVSLYIPEGFFGITFYKCLDAQFVCMPELLESRLQVPQLDVVNLNDTFQSIFPGTIEGDIGVFPCFVPEPWQLMNLPPPNEHRFFSLRTRQTLVIGPGHTQTVYFDAAYVHAPGICALIVGVRQFSQSDLIIRPTIWLPGTAAGVTVVNTSHTTVCISPHTTVAKAVFTTHRFTYLPVGSHPLGQMIVPPTPDIGFTHTPEHALLQRTPSPVDDDVDETEEDEKSSDAESPVNTNDVIFDVGPKPPRHP</sequence>
<reference key="1">
    <citation type="journal article" date="1990" name="Curr. Top. Microbiol. Immunol.">
        <title>Analysis of the protein-coding content of the sequence of human cytomegalovirus strain AD169.</title>
        <authorList>
            <person name="Chee M.S."/>
            <person name="Bankier A.T."/>
            <person name="Beck S."/>
            <person name="Bohni R."/>
            <person name="Brown C.M."/>
            <person name="Cerny R."/>
            <person name="Horsnell T."/>
            <person name="Hutchison C.A. III"/>
            <person name="Kouzarides T."/>
            <person name="Martignetti J.A."/>
            <person name="Preddie E."/>
            <person name="Satchwell S.C."/>
            <person name="Tomlinson P."/>
            <person name="Weston K.M."/>
            <person name="Barrell B.G."/>
        </authorList>
    </citation>
    <scope>NUCLEOTIDE SEQUENCE [GENOMIC DNA]</scope>
</reference>
<reference key="2">
    <citation type="journal article" date="2003" name="J. Gen. Virol.">
        <title>The human cytomegalovirus genome revisited: comparison with the chimpanzee cytomegalovirus genome.</title>
        <authorList>
            <person name="Davison A.J."/>
            <person name="Dolan A."/>
            <person name="Akter P."/>
            <person name="Addison C."/>
            <person name="Dargan D.J."/>
            <person name="Alcendor D.J."/>
            <person name="McGeoch D.J."/>
            <person name="Hayward G.S."/>
        </authorList>
    </citation>
    <scope>GENOME REANNOTATION</scope>
</reference>
<reference key="3">
    <citation type="journal article" date="2003" name="J. Gen. Virol.">
        <authorList>
            <person name="Davison A.J."/>
            <person name="Dolan A."/>
            <person name="Akter P."/>
            <person name="Addison C."/>
            <person name="Dargan D.J."/>
            <person name="Alcendor D.J."/>
            <person name="McGeoch D.J."/>
            <person name="Hayward G.S."/>
        </authorList>
    </citation>
    <scope>ERRATUM OF PUBMED:12533697</scope>
</reference>
<reference key="4">
    <citation type="journal article" date="2004" name="J. Virol.">
        <title>Identification of proteins in human cytomegalovirus (HCMV) particles: the HCMV proteome.</title>
        <authorList>
            <person name="Varnum S.M."/>
            <person name="Streblow D.N."/>
            <person name="Monroe M.E."/>
            <person name="Smith P."/>
            <person name="Auberry K.J."/>
            <person name="Pasa-Tolic L."/>
            <person name="Wang D."/>
            <person name="Camp D.G. II"/>
            <person name="Rodland K."/>
            <person name="Wiley S."/>
            <person name="Britt W."/>
            <person name="Shenk T."/>
            <person name="Smith R.D."/>
            <person name="Nelson J.A."/>
        </authorList>
    </citation>
    <scope>IDENTIFICATION</scope>
</reference>
<reference key="5">
    <citation type="journal article" date="2004" name="J. Virol.">
        <authorList>
            <person name="Varnum S.M."/>
            <person name="Streblow D.N."/>
            <person name="Monroe M.E."/>
            <person name="Smith P."/>
            <person name="Auberry K.J."/>
            <person name="Pasa-Tolic L."/>
            <person name="Wang D."/>
            <person name="Camp D.G. II"/>
            <person name="Rodland K."/>
            <person name="Wiley S."/>
            <person name="Britt W."/>
            <person name="Shenk T."/>
            <person name="Smith R.D."/>
            <person name="Nelson J.A."/>
        </authorList>
    </citation>
    <scope>ERRATUM OF PUBMED:15452216</scope>
</reference>
<evidence type="ECO:0000255" key="1">
    <source>
        <dbReference type="HAMAP-Rule" id="MF_04031"/>
    </source>
</evidence>
<evidence type="ECO:0000256" key="2">
    <source>
        <dbReference type="SAM" id="MobiDB-lite"/>
    </source>
</evidence>
<comment type="function">
    <text evidence="1">Involved in nucleotide metabolism: produces dUMP, the immediate precursor of thymidine nucleotides and decreases the intracellular concentration of dUTP to avoid uracil incorporation into viral DNA.</text>
</comment>
<comment type="catalytic activity">
    <reaction evidence="1">
        <text>dUTP + H2O = dUMP + diphosphate + H(+)</text>
        <dbReference type="Rhea" id="RHEA:10248"/>
        <dbReference type="ChEBI" id="CHEBI:15377"/>
        <dbReference type="ChEBI" id="CHEBI:15378"/>
        <dbReference type="ChEBI" id="CHEBI:33019"/>
        <dbReference type="ChEBI" id="CHEBI:61555"/>
        <dbReference type="ChEBI" id="CHEBI:246422"/>
        <dbReference type="EC" id="3.6.1.23"/>
    </reaction>
</comment>
<comment type="cofactor">
    <cofactor evidence="1">
        <name>Mg(2+)</name>
        <dbReference type="ChEBI" id="CHEBI:18420"/>
    </cofactor>
</comment>
<comment type="pathway">
    <text>Pyrimidine metabolism; dUMP biosynthesis; dUMP from dCTP (dUTP route): step 2/2.</text>
</comment>
<comment type="subcellular location">
    <subcellularLocation>
        <location>Virion</location>
    </subcellularLocation>
</comment>
<comment type="similarity">
    <text evidence="1">Belongs to the dUTPase family.</text>
</comment>